<accession>Q818H8</accession>
<reference key="1">
    <citation type="journal article" date="2003" name="Nature">
        <title>Genome sequence of Bacillus cereus and comparative analysis with Bacillus anthracis.</title>
        <authorList>
            <person name="Ivanova N."/>
            <person name="Sorokin A."/>
            <person name="Anderson I."/>
            <person name="Galleron N."/>
            <person name="Candelon B."/>
            <person name="Kapatral V."/>
            <person name="Bhattacharyya A."/>
            <person name="Reznik G."/>
            <person name="Mikhailova N."/>
            <person name="Lapidus A."/>
            <person name="Chu L."/>
            <person name="Mazur M."/>
            <person name="Goltsman E."/>
            <person name="Larsen N."/>
            <person name="D'Souza M."/>
            <person name="Walunas T."/>
            <person name="Grechkin Y."/>
            <person name="Pusch G."/>
            <person name="Haselkorn R."/>
            <person name="Fonstein M."/>
            <person name="Ehrlich S.D."/>
            <person name="Overbeek R."/>
            <person name="Kyrpides N.C."/>
        </authorList>
    </citation>
    <scope>NUCLEOTIDE SEQUENCE [LARGE SCALE GENOMIC DNA]</scope>
    <source>
        <strain>ATCC 14579 / DSM 31 / CCUG 7414 / JCM 2152 / NBRC 15305 / NCIMB 9373 / NCTC 2599 / NRRL B-3711</strain>
    </source>
</reference>
<gene>
    <name evidence="1" type="primary">ispG</name>
    <name type="ordered locus">BC_4276</name>
</gene>
<organism>
    <name type="scientific">Bacillus cereus (strain ATCC 14579 / DSM 31 / CCUG 7414 / JCM 2152 / NBRC 15305 / NCIMB 9373 / NCTC 2599 / NRRL B-3711)</name>
    <dbReference type="NCBI Taxonomy" id="226900"/>
    <lineage>
        <taxon>Bacteria</taxon>
        <taxon>Bacillati</taxon>
        <taxon>Bacillota</taxon>
        <taxon>Bacilli</taxon>
        <taxon>Bacillales</taxon>
        <taxon>Bacillaceae</taxon>
        <taxon>Bacillus</taxon>
        <taxon>Bacillus cereus group</taxon>
    </lineage>
</organism>
<comment type="function">
    <text evidence="1">Converts 2C-methyl-D-erythritol 2,4-cyclodiphosphate (ME-2,4cPP) into 1-hydroxy-2-methyl-2-(E)-butenyl 4-diphosphate.</text>
</comment>
<comment type="catalytic activity">
    <reaction evidence="1">
        <text>(2E)-4-hydroxy-3-methylbut-2-enyl diphosphate + oxidized [flavodoxin] + H2O + 2 H(+) = 2-C-methyl-D-erythritol 2,4-cyclic diphosphate + reduced [flavodoxin]</text>
        <dbReference type="Rhea" id="RHEA:43604"/>
        <dbReference type="Rhea" id="RHEA-COMP:10622"/>
        <dbReference type="Rhea" id="RHEA-COMP:10623"/>
        <dbReference type="ChEBI" id="CHEBI:15377"/>
        <dbReference type="ChEBI" id="CHEBI:15378"/>
        <dbReference type="ChEBI" id="CHEBI:57618"/>
        <dbReference type="ChEBI" id="CHEBI:58210"/>
        <dbReference type="ChEBI" id="CHEBI:58483"/>
        <dbReference type="ChEBI" id="CHEBI:128753"/>
        <dbReference type="EC" id="1.17.7.3"/>
    </reaction>
</comment>
<comment type="cofactor">
    <cofactor evidence="1">
        <name>[4Fe-4S] cluster</name>
        <dbReference type="ChEBI" id="CHEBI:49883"/>
    </cofactor>
    <text evidence="1">Binds 1 [4Fe-4S] cluster.</text>
</comment>
<comment type="pathway">
    <text evidence="1">Isoprenoid biosynthesis; isopentenyl diphosphate biosynthesis via DXP pathway; isopentenyl diphosphate from 1-deoxy-D-xylulose 5-phosphate: step 5/6.</text>
</comment>
<comment type="similarity">
    <text evidence="1">Belongs to the IspG family.</text>
</comment>
<sequence length="370" mass="40016">MNEMTHRTKTRPVKVGNLTIGGNNELIIQSMTTTKTHDVEATVAEIKRLEEAGCQVVRVAVPDERAADAIADIKKQINIPLVADIHFDYRLALKAIEGGIDKVRINPGNIGRRHKVEAVVNAAKERGIPIRIGVNAGSLERHILEKYGYPTADGMVESALHHIKILEDLDFHDIIVSMKASDVNLAIEAYEKAARAFDYPLHLGITESGTLFAGTVKSAAGLGAILNKGIGNTLRISLSADPVEEVKVARELLKSFGLASNAATLISCPTCGRIEIDLISIANEVEEYISTLQVPIKVAVLGCAVNGPGEAREADIGIAGARGEGLLFRKGQVVRKVPEETMVEELKKEIDVIAAEMAAEREKEKETQEQ</sequence>
<evidence type="ECO:0000255" key="1">
    <source>
        <dbReference type="HAMAP-Rule" id="MF_00159"/>
    </source>
</evidence>
<name>ISPG_BACCR</name>
<proteinExistence type="inferred from homology"/>
<dbReference type="EC" id="1.17.7.3" evidence="1"/>
<dbReference type="EMBL" id="AE016877">
    <property type="protein sequence ID" value="AAP11190.1"/>
    <property type="molecule type" value="Genomic_DNA"/>
</dbReference>
<dbReference type="RefSeq" id="NP_833989.1">
    <property type="nucleotide sequence ID" value="NC_004722.1"/>
</dbReference>
<dbReference type="SMR" id="Q818H8"/>
<dbReference type="STRING" id="226900.BC_4276"/>
<dbReference type="KEGG" id="bce:BC4276"/>
<dbReference type="PATRIC" id="fig|226900.8.peg.4420"/>
<dbReference type="HOGENOM" id="CLU_042258_0_0_9"/>
<dbReference type="OrthoDB" id="9803214at2"/>
<dbReference type="UniPathway" id="UPA00056">
    <property type="reaction ID" value="UER00096"/>
</dbReference>
<dbReference type="Proteomes" id="UP000001417">
    <property type="component" value="Chromosome"/>
</dbReference>
<dbReference type="GO" id="GO:0051539">
    <property type="term" value="F:4 iron, 4 sulfur cluster binding"/>
    <property type="evidence" value="ECO:0007669"/>
    <property type="project" value="UniProtKB-UniRule"/>
</dbReference>
<dbReference type="GO" id="GO:0046429">
    <property type="term" value="F:4-hydroxy-3-methylbut-2-en-1-yl diphosphate synthase activity (ferredoxin)"/>
    <property type="evidence" value="ECO:0000318"/>
    <property type="project" value="GO_Central"/>
</dbReference>
<dbReference type="GO" id="GO:0141197">
    <property type="term" value="F:4-hydroxy-3-methylbut-2-enyl-diphosphate synthase activity (flavodoxin)"/>
    <property type="evidence" value="ECO:0007669"/>
    <property type="project" value="UniProtKB-EC"/>
</dbReference>
<dbReference type="GO" id="GO:0005506">
    <property type="term" value="F:iron ion binding"/>
    <property type="evidence" value="ECO:0007669"/>
    <property type="project" value="InterPro"/>
</dbReference>
<dbReference type="GO" id="GO:0019288">
    <property type="term" value="P:isopentenyl diphosphate biosynthetic process, methylerythritol 4-phosphate pathway"/>
    <property type="evidence" value="ECO:0000318"/>
    <property type="project" value="GO_Central"/>
</dbReference>
<dbReference type="GO" id="GO:0016114">
    <property type="term" value="P:terpenoid biosynthetic process"/>
    <property type="evidence" value="ECO:0007669"/>
    <property type="project" value="InterPro"/>
</dbReference>
<dbReference type="FunFam" id="3.20.20.20:FF:000001">
    <property type="entry name" value="4-hydroxy-3-methylbut-2-en-1-yl diphosphate synthase (flavodoxin)"/>
    <property type="match status" value="1"/>
</dbReference>
<dbReference type="FunFam" id="3.30.413.10:FF:000005">
    <property type="entry name" value="4-hydroxy-3-methylbut-2-en-1-yl diphosphate synthase (flavodoxin)"/>
    <property type="match status" value="1"/>
</dbReference>
<dbReference type="Gene3D" id="3.20.20.20">
    <property type="entry name" value="Dihydropteroate synthase-like"/>
    <property type="match status" value="1"/>
</dbReference>
<dbReference type="Gene3D" id="3.30.413.10">
    <property type="entry name" value="Sulfite Reductase Hemoprotein, domain 1"/>
    <property type="match status" value="1"/>
</dbReference>
<dbReference type="HAMAP" id="MF_00159">
    <property type="entry name" value="IspG"/>
    <property type="match status" value="1"/>
</dbReference>
<dbReference type="InterPro" id="IPR011005">
    <property type="entry name" value="Dihydropteroate_synth-like_sf"/>
</dbReference>
<dbReference type="InterPro" id="IPR016425">
    <property type="entry name" value="IspG_bac"/>
</dbReference>
<dbReference type="InterPro" id="IPR004588">
    <property type="entry name" value="IspG_bac-typ"/>
</dbReference>
<dbReference type="InterPro" id="IPR045854">
    <property type="entry name" value="NO2/SO3_Rdtase_4Fe4S_sf"/>
</dbReference>
<dbReference type="NCBIfam" id="TIGR00612">
    <property type="entry name" value="ispG_gcpE"/>
    <property type="match status" value="1"/>
</dbReference>
<dbReference type="NCBIfam" id="NF001540">
    <property type="entry name" value="PRK00366.1"/>
    <property type="match status" value="1"/>
</dbReference>
<dbReference type="PANTHER" id="PTHR30454">
    <property type="entry name" value="4-HYDROXY-3-METHYLBUT-2-EN-1-YL DIPHOSPHATE SYNTHASE"/>
    <property type="match status" value="1"/>
</dbReference>
<dbReference type="PANTHER" id="PTHR30454:SF0">
    <property type="entry name" value="4-HYDROXY-3-METHYLBUT-2-EN-1-YL DIPHOSPHATE SYNTHASE (FERREDOXIN), CHLOROPLASTIC"/>
    <property type="match status" value="1"/>
</dbReference>
<dbReference type="Pfam" id="PF04551">
    <property type="entry name" value="GcpE"/>
    <property type="match status" value="1"/>
</dbReference>
<dbReference type="PIRSF" id="PIRSF004640">
    <property type="entry name" value="IspG"/>
    <property type="match status" value="1"/>
</dbReference>
<dbReference type="SUPFAM" id="SSF51717">
    <property type="entry name" value="Dihydropteroate synthetase-like"/>
    <property type="match status" value="1"/>
</dbReference>
<dbReference type="SUPFAM" id="SSF56014">
    <property type="entry name" value="Nitrite and sulphite reductase 4Fe-4S domain-like"/>
    <property type="match status" value="1"/>
</dbReference>
<feature type="chain" id="PRO_0000190529" description="4-hydroxy-3-methylbut-2-en-1-yl diphosphate synthase (flavodoxin)">
    <location>
        <begin position="1"/>
        <end position="370"/>
    </location>
</feature>
<feature type="binding site" evidence="1">
    <location>
        <position position="268"/>
    </location>
    <ligand>
        <name>[4Fe-4S] cluster</name>
        <dbReference type="ChEBI" id="CHEBI:49883"/>
    </ligand>
</feature>
<feature type="binding site" evidence="1">
    <location>
        <position position="271"/>
    </location>
    <ligand>
        <name>[4Fe-4S] cluster</name>
        <dbReference type="ChEBI" id="CHEBI:49883"/>
    </ligand>
</feature>
<feature type="binding site" evidence="1">
    <location>
        <position position="303"/>
    </location>
    <ligand>
        <name>[4Fe-4S] cluster</name>
        <dbReference type="ChEBI" id="CHEBI:49883"/>
    </ligand>
</feature>
<feature type="binding site" evidence="1">
    <location>
        <position position="310"/>
    </location>
    <ligand>
        <name>[4Fe-4S] cluster</name>
        <dbReference type="ChEBI" id="CHEBI:49883"/>
    </ligand>
</feature>
<protein>
    <recommendedName>
        <fullName evidence="1">4-hydroxy-3-methylbut-2-en-1-yl diphosphate synthase (flavodoxin)</fullName>
        <ecNumber evidence="1">1.17.7.3</ecNumber>
    </recommendedName>
    <alternativeName>
        <fullName evidence="1">1-hydroxy-2-methyl-2-(E)-butenyl 4-diphosphate synthase</fullName>
    </alternativeName>
</protein>
<keyword id="KW-0004">4Fe-4S</keyword>
<keyword id="KW-0408">Iron</keyword>
<keyword id="KW-0411">Iron-sulfur</keyword>
<keyword id="KW-0414">Isoprene biosynthesis</keyword>
<keyword id="KW-0479">Metal-binding</keyword>
<keyword id="KW-0560">Oxidoreductase</keyword>
<keyword id="KW-1185">Reference proteome</keyword>